<dbReference type="EC" id="6.1.1.17" evidence="1"/>
<dbReference type="EMBL" id="CP001127">
    <property type="protein sequence ID" value="ACF91674.1"/>
    <property type="molecule type" value="Genomic_DNA"/>
</dbReference>
<dbReference type="RefSeq" id="WP_000695623.1">
    <property type="nucleotide sequence ID" value="NC_011094.1"/>
</dbReference>
<dbReference type="SMR" id="B4TQE9"/>
<dbReference type="KEGG" id="sew:SeSA_A2649"/>
<dbReference type="HOGENOM" id="CLU_015768_6_0_6"/>
<dbReference type="Proteomes" id="UP000001865">
    <property type="component" value="Chromosome"/>
</dbReference>
<dbReference type="GO" id="GO:0005829">
    <property type="term" value="C:cytosol"/>
    <property type="evidence" value="ECO:0007669"/>
    <property type="project" value="TreeGrafter"/>
</dbReference>
<dbReference type="GO" id="GO:0005524">
    <property type="term" value="F:ATP binding"/>
    <property type="evidence" value="ECO:0007669"/>
    <property type="project" value="UniProtKB-UniRule"/>
</dbReference>
<dbReference type="GO" id="GO:0004818">
    <property type="term" value="F:glutamate-tRNA ligase activity"/>
    <property type="evidence" value="ECO:0007669"/>
    <property type="project" value="UniProtKB-UniRule"/>
</dbReference>
<dbReference type="GO" id="GO:0000049">
    <property type="term" value="F:tRNA binding"/>
    <property type="evidence" value="ECO:0007669"/>
    <property type="project" value="InterPro"/>
</dbReference>
<dbReference type="GO" id="GO:0008270">
    <property type="term" value="F:zinc ion binding"/>
    <property type="evidence" value="ECO:0007669"/>
    <property type="project" value="UniProtKB-UniRule"/>
</dbReference>
<dbReference type="GO" id="GO:0006424">
    <property type="term" value="P:glutamyl-tRNA aminoacylation"/>
    <property type="evidence" value="ECO:0007669"/>
    <property type="project" value="UniProtKB-UniRule"/>
</dbReference>
<dbReference type="CDD" id="cd00808">
    <property type="entry name" value="GluRS_core"/>
    <property type="match status" value="1"/>
</dbReference>
<dbReference type="FunFam" id="1.10.10.350:FF:000001">
    <property type="entry name" value="Glutamate--tRNA ligase"/>
    <property type="match status" value="1"/>
</dbReference>
<dbReference type="FunFam" id="3.40.50.620:FF:000007">
    <property type="entry name" value="Glutamate--tRNA ligase"/>
    <property type="match status" value="1"/>
</dbReference>
<dbReference type="Gene3D" id="1.10.10.350">
    <property type="match status" value="1"/>
</dbReference>
<dbReference type="Gene3D" id="3.40.50.620">
    <property type="entry name" value="HUPs"/>
    <property type="match status" value="1"/>
</dbReference>
<dbReference type="HAMAP" id="MF_00022">
    <property type="entry name" value="Glu_tRNA_synth_type1"/>
    <property type="match status" value="1"/>
</dbReference>
<dbReference type="InterPro" id="IPR045462">
    <property type="entry name" value="aa-tRNA-synth_I_cd-bd"/>
</dbReference>
<dbReference type="InterPro" id="IPR020751">
    <property type="entry name" value="aa-tRNA-synth_I_codon-bd_sub2"/>
</dbReference>
<dbReference type="InterPro" id="IPR001412">
    <property type="entry name" value="aa-tRNA-synth_I_CS"/>
</dbReference>
<dbReference type="InterPro" id="IPR008925">
    <property type="entry name" value="aa_tRNA-synth_I_cd-bd_sf"/>
</dbReference>
<dbReference type="InterPro" id="IPR004527">
    <property type="entry name" value="Glu-tRNA-ligase_bac/mito"/>
</dbReference>
<dbReference type="InterPro" id="IPR000924">
    <property type="entry name" value="Glu/Gln-tRNA-synth"/>
</dbReference>
<dbReference type="InterPro" id="IPR020058">
    <property type="entry name" value="Glu/Gln-tRNA-synth_Ib_cat-dom"/>
</dbReference>
<dbReference type="InterPro" id="IPR049940">
    <property type="entry name" value="GluQ/Sye"/>
</dbReference>
<dbReference type="InterPro" id="IPR033910">
    <property type="entry name" value="GluRS_core"/>
</dbReference>
<dbReference type="InterPro" id="IPR014729">
    <property type="entry name" value="Rossmann-like_a/b/a_fold"/>
</dbReference>
<dbReference type="NCBIfam" id="TIGR00464">
    <property type="entry name" value="gltX_bact"/>
    <property type="match status" value="1"/>
</dbReference>
<dbReference type="PANTHER" id="PTHR43311">
    <property type="entry name" value="GLUTAMATE--TRNA LIGASE"/>
    <property type="match status" value="1"/>
</dbReference>
<dbReference type="PANTHER" id="PTHR43311:SF2">
    <property type="entry name" value="GLUTAMATE--TRNA LIGASE, MITOCHONDRIAL-RELATED"/>
    <property type="match status" value="1"/>
</dbReference>
<dbReference type="Pfam" id="PF19269">
    <property type="entry name" value="Anticodon_2"/>
    <property type="match status" value="1"/>
</dbReference>
<dbReference type="Pfam" id="PF00749">
    <property type="entry name" value="tRNA-synt_1c"/>
    <property type="match status" value="1"/>
</dbReference>
<dbReference type="PRINTS" id="PR00987">
    <property type="entry name" value="TRNASYNTHGLU"/>
</dbReference>
<dbReference type="SUPFAM" id="SSF48163">
    <property type="entry name" value="An anticodon-binding domain of class I aminoacyl-tRNA synthetases"/>
    <property type="match status" value="1"/>
</dbReference>
<dbReference type="SUPFAM" id="SSF52374">
    <property type="entry name" value="Nucleotidylyl transferase"/>
    <property type="match status" value="1"/>
</dbReference>
<dbReference type="PROSITE" id="PS00178">
    <property type="entry name" value="AA_TRNA_LIGASE_I"/>
    <property type="match status" value="1"/>
</dbReference>
<proteinExistence type="inferred from homology"/>
<evidence type="ECO:0000255" key="1">
    <source>
        <dbReference type="HAMAP-Rule" id="MF_00022"/>
    </source>
</evidence>
<organism>
    <name type="scientific">Salmonella schwarzengrund (strain CVM19633)</name>
    <dbReference type="NCBI Taxonomy" id="439843"/>
    <lineage>
        <taxon>Bacteria</taxon>
        <taxon>Pseudomonadati</taxon>
        <taxon>Pseudomonadota</taxon>
        <taxon>Gammaproteobacteria</taxon>
        <taxon>Enterobacterales</taxon>
        <taxon>Enterobacteriaceae</taxon>
        <taxon>Salmonella</taxon>
    </lineage>
</organism>
<comment type="function">
    <text evidence="1">Catalyzes the attachment of glutamate to tRNA(Glu) in a two-step reaction: glutamate is first activated by ATP to form Glu-AMP and then transferred to the acceptor end of tRNA(Glu).</text>
</comment>
<comment type="catalytic activity">
    <reaction evidence="1">
        <text>tRNA(Glu) + L-glutamate + ATP = L-glutamyl-tRNA(Glu) + AMP + diphosphate</text>
        <dbReference type="Rhea" id="RHEA:23540"/>
        <dbReference type="Rhea" id="RHEA-COMP:9663"/>
        <dbReference type="Rhea" id="RHEA-COMP:9680"/>
        <dbReference type="ChEBI" id="CHEBI:29985"/>
        <dbReference type="ChEBI" id="CHEBI:30616"/>
        <dbReference type="ChEBI" id="CHEBI:33019"/>
        <dbReference type="ChEBI" id="CHEBI:78442"/>
        <dbReference type="ChEBI" id="CHEBI:78520"/>
        <dbReference type="ChEBI" id="CHEBI:456215"/>
        <dbReference type="EC" id="6.1.1.17"/>
    </reaction>
</comment>
<comment type="cofactor">
    <cofactor evidence="1">
        <name>Zn(2+)</name>
        <dbReference type="ChEBI" id="CHEBI:29105"/>
    </cofactor>
    <text evidence="1">Binds 1 zinc ion per subunit.</text>
</comment>
<comment type="subunit">
    <text evidence="1">Monomer.</text>
</comment>
<comment type="subcellular location">
    <subcellularLocation>
        <location evidence="1">Cytoplasm</location>
    </subcellularLocation>
</comment>
<comment type="similarity">
    <text evidence="1">Belongs to the class-I aminoacyl-tRNA synthetase family. Glutamate--tRNA ligase type 1 subfamily.</text>
</comment>
<sequence length="471" mass="53634">MKIKTRFAPSPTGYLHVGGARTALYSWLFARHHGGEFVLRIEDTDLERSTPEAIEAIMDGMNWLNLEWDEGPYFQTKRFDRYNAVIDEMLEAGTAYKCYCSKERLEQLREDQMAKGEKPRYDGRCRHSHEHHADDEPCVVRFANPQDGSVIFDDQIRGPIEFSNQELDDLIIRRTDGSPTYNFCVVVDDWDMEITHVIRGEDHINNTPRQINILKALNAPVPMYAHVSMINGDDGKKLSKRHGAVSVMQYRDDGYLPEALLNYLVRLGWSSGDQEIFTREEMIKLFSLGAVSKSASAFNTDKLLWLNHHYINTLAPEYVATHLQWHIEQENIDTRNGPQLAELVKLLGERCKTLKEMAQSCRYFYEDFSEFDADAAKKHLRPVARQPLEVVRDKLSAITDWSAENVHHAIQATADELEVGMGKVGMPLRVAVTGAGQSPALDVTVHAIGKTRSIERINKALGFIAERESQQ</sequence>
<gene>
    <name evidence="1" type="primary">gltX</name>
    <name type="ordered locus">SeSA_A2649</name>
</gene>
<keyword id="KW-0030">Aminoacyl-tRNA synthetase</keyword>
<keyword id="KW-0067">ATP-binding</keyword>
<keyword id="KW-0963">Cytoplasm</keyword>
<keyword id="KW-0436">Ligase</keyword>
<keyword id="KW-0479">Metal-binding</keyword>
<keyword id="KW-0547">Nucleotide-binding</keyword>
<keyword id="KW-0648">Protein biosynthesis</keyword>
<keyword id="KW-0862">Zinc</keyword>
<name>SYE_SALSV</name>
<accession>B4TQE9</accession>
<protein>
    <recommendedName>
        <fullName evidence="1">Glutamate--tRNA ligase</fullName>
        <ecNumber evidence="1">6.1.1.17</ecNumber>
    </recommendedName>
    <alternativeName>
        <fullName evidence="1">Glutamyl-tRNA synthetase</fullName>
        <shortName evidence="1">GluRS</shortName>
    </alternativeName>
</protein>
<feature type="chain" id="PRO_1000090106" description="Glutamate--tRNA ligase">
    <location>
        <begin position="1"/>
        <end position="471"/>
    </location>
</feature>
<feature type="short sequence motif" description="'HIGH' region" evidence="1">
    <location>
        <begin position="9"/>
        <end position="19"/>
    </location>
</feature>
<feature type="short sequence motif" description="'KMSKS' region" evidence="1">
    <location>
        <begin position="237"/>
        <end position="241"/>
    </location>
</feature>
<feature type="binding site" evidence="1">
    <location>
        <position position="98"/>
    </location>
    <ligand>
        <name>Zn(2+)</name>
        <dbReference type="ChEBI" id="CHEBI:29105"/>
    </ligand>
</feature>
<feature type="binding site" evidence="1">
    <location>
        <position position="100"/>
    </location>
    <ligand>
        <name>Zn(2+)</name>
        <dbReference type="ChEBI" id="CHEBI:29105"/>
    </ligand>
</feature>
<feature type="binding site" evidence="1">
    <location>
        <position position="125"/>
    </location>
    <ligand>
        <name>Zn(2+)</name>
        <dbReference type="ChEBI" id="CHEBI:29105"/>
    </ligand>
</feature>
<feature type="binding site" evidence="1">
    <location>
        <position position="127"/>
    </location>
    <ligand>
        <name>Zn(2+)</name>
        <dbReference type="ChEBI" id="CHEBI:29105"/>
    </ligand>
</feature>
<feature type="binding site" evidence="1">
    <location>
        <position position="240"/>
    </location>
    <ligand>
        <name>ATP</name>
        <dbReference type="ChEBI" id="CHEBI:30616"/>
    </ligand>
</feature>
<reference key="1">
    <citation type="journal article" date="2011" name="J. Bacteriol.">
        <title>Comparative genomics of 28 Salmonella enterica isolates: evidence for CRISPR-mediated adaptive sublineage evolution.</title>
        <authorList>
            <person name="Fricke W.F."/>
            <person name="Mammel M.K."/>
            <person name="McDermott P.F."/>
            <person name="Tartera C."/>
            <person name="White D.G."/>
            <person name="Leclerc J.E."/>
            <person name="Ravel J."/>
            <person name="Cebula T.A."/>
        </authorList>
    </citation>
    <scope>NUCLEOTIDE SEQUENCE [LARGE SCALE GENOMIC DNA]</scope>
    <source>
        <strain>CVM19633</strain>
    </source>
</reference>